<accession>P83179</accession>
<comment type="function">
    <text evidence="1 4">Degradation of glucosinolates (glucose residue linked by a thioglucoside bound to an amino acid derivative) to glucose, sulfate and any of the products: thiocyanates, isothiocyanates, nitriles, epithionitriles or oxazolidine-2-thiones.</text>
</comment>
<comment type="catalytic activity">
    <reaction evidence="4">
        <text>a thioglucoside + H2O = a sugar + a thiol.</text>
        <dbReference type="EC" id="3.2.1.147"/>
    </reaction>
</comment>
<comment type="activity regulation">
    <text evidence="4">Inhibited by ascorbate.</text>
</comment>
<comment type="biophysicochemical properties">
    <kinetics>
        <KM evidence="4">0.41 mM for sinigrin (at pH 4.5 and 37 degrees Celsius)</KM>
        <KM evidence="4">0.52 mM for p-nitrophenyl-beta-glucopyranoside (at pH 4.5 and 37 degrees Celsius)</KM>
    </kinetics>
    <temperatureDependence>
        <text evidence="4">Optimum temperature is about 40 degrees Celsius.</text>
    </temperatureDependence>
</comment>
<comment type="subunit">
    <text evidence="4">Homodimer.</text>
</comment>
<comment type="similarity">
    <text evidence="6">Belongs to the glycosyl hydrolase 1 family.</text>
</comment>
<comment type="caution">
    <text evidence="6">The order of the peptides shown is unknown.</text>
</comment>
<name>MYRO2_BREBR</name>
<feature type="chain" id="PRO_0000063904" description="Myrosinase 2">
    <location>
        <begin position="1" status="less than"/>
        <end position="140" status="greater than"/>
    </location>
</feature>
<feature type="active site" description="Nucleophile" evidence="3">
    <location>
        <position position="70"/>
    </location>
</feature>
<feature type="glycosylation site" description="N-linked (GlcNAc...) asparagine" evidence="2">
    <location>
        <position position="114"/>
    </location>
</feature>
<feature type="glycosylation site" description="N-linked (GlcNAc...) asparagine" evidence="2">
    <location>
        <position position="127"/>
    </location>
</feature>
<feature type="non-consecutive residues" evidence="5">
    <location>
        <begin position="12"/>
        <end position="13"/>
    </location>
</feature>
<feature type="non-consecutive residues" evidence="5">
    <location>
        <begin position="26"/>
        <end position="27"/>
    </location>
</feature>
<feature type="non-consecutive residues" evidence="5">
    <location>
        <begin position="35"/>
        <end position="36"/>
    </location>
</feature>
<feature type="non-consecutive residues" evidence="5">
    <location>
        <begin position="44"/>
        <end position="45"/>
    </location>
</feature>
<feature type="non-consecutive residues" evidence="5">
    <location>
        <begin position="58"/>
        <end position="59"/>
    </location>
</feature>
<feature type="non-consecutive residues" evidence="5">
    <location>
        <begin position="84"/>
        <end position="85"/>
    </location>
</feature>
<feature type="non-consecutive residues" evidence="5">
    <location>
        <begin position="97"/>
        <end position="98"/>
    </location>
</feature>
<feature type="non-consecutive residues" evidence="5">
    <location>
        <begin position="111"/>
        <end position="112"/>
    </location>
</feature>
<feature type="non-consecutive residues" evidence="5">
    <location>
        <begin position="124"/>
        <end position="125"/>
    </location>
</feature>
<feature type="non-terminal residue" evidence="5">
    <location>
        <position position="1"/>
    </location>
</feature>
<feature type="non-terminal residue" evidence="5">
    <location>
        <position position="140"/>
    </location>
</feature>
<dbReference type="EC" id="3.2.1.147"/>
<dbReference type="SMR" id="P83179"/>
<dbReference type="GO" id="GO:0019137">
    <property type="term" value="F:thioglucosidase activity"/>
    <property type="evidence" value="ECO:0007669"/>
    <property type="project" value="UniProtKB-EC"/>
</dbReference>
<dbReference type="InterPro" id="IPR017853">
    <property type="entry name" value="Glycoside_hydrolase_SF"/>
</dbReference>
<dbReference type="SUPFAM" id="SSF51445">
    <property type="entry name" value="(Trans)glycosidases"/>
    <property type="match status" value="1"/>
</dbReference>
<protein>
    <recommendedName>
        <fullName>Myrosinase 2</fullName>
        <ecNumber>3.2.1.147</ecNumber>
    </recommendedName>
    <alternativeName>
        <fullName>Beta-glucosidase 2</fullName>
    </alternativeName>
    <alternativeName>
        <fullName>Beta-thioglucosidase 2</fullName>
    </alternativeName>
    <alternativeName>
        <fullName>Beta-thioglucosidase glucohydrolase 2</fullName>
    </alternativeName>
    <alternativeName>
        <fullName>Myrosinase</fullName>
    </alternativeName>
    <alternativeName>
        <fullName>Sinigrinase 2</fullName>
    </alternativeName>
    <alternativeName>
        <fullName>Thioglucosidase 2</fullName>
    </alternativeName>
</protein>
<proteinExistence type="evidence at protein level"/>
<organism evidence="6">
    <name type="scientific">Brevicoryne brassicae</name>
    <name type="common">Mealy cabbage aphid</name>
    <dbReference type="NCBI Taxonomy" id="69196"/>
    <lineage>
        <taxon>Eukaryota</taxon>
        <taxon>Metazoa</taxon>
        <taxon>Ecdysozoa</taxon>
        <taxon>Arthropoda</taxon>
        <taxon>Hexapoda</taxon>
        <taxon>Insecta</taxon>
        <taxon>Pterygota</taxon>
        <taxon>Neoptera</taxon>
        <taxon>Paraneoptera</taxon>
        <taxon>Hemiptera</taxon>
        <taxon>Sternorrhyncha</taxon>
        <taxon>Aphidomorpha</taxon>
        <taxon>Aphidoidea</taxon>
        <taxon>Aphididae</taxon>
        <taxon>Macrosiphini</taxon>
        <taxon>Brevicoryne</taxon>
    </lineage>
</organism>
<reference evidence="6" key="1">
    <citation type="journal article" date="2001" name="Eur. J. Biochem.">
        <title>Purification and characterization of myrosinase from the cabbage aphid (Brevicoryne brassicae), a brassica herbivore.</title>
        <authorList>
            <person name="Pontoppidan B."/>
            <person name="Ekbom B."/>
            <person name="Eriksson S."/>
            <person name="Meijer J."/>
        </authorList>
    </citation>
    <scope>PROTEIN SEQUENCE</scope>
    <scope>FUNCTION</scope>
    <scope>CATALYTIC ACTIVITY</scope>
    <scope>ACTIVITY REGULATION</scope>
    <scope>BIOPHYSICOCHEMICAL PROPERTIES</scope>
    <scope>SUBUNIT</scope>
</reference>
<evidence type="ECO:0000250" key="1">
    <source>
        <dbReference type="UniProtKB" id="P37702"/>
    </source>
</evidence>
<evidence type="ECO:0000255" key="2"/>
<evidence type="ECO:0000255" key="3">
    <source>
        <dbReference type="PROSITE-ProRule" id="PRU10055"/>
    </source>
</evidence>
<evidence type="ECO:0000269" key="4">
    <source>
    </source>
</evidence>
<evidence type="ECO:0000303" key="5">
    <source>
    </source>
</evidence>
<evidence type="ECO:0000305" key="6"/>
<keyword id="KW-0903">Direct protein sequencing</keyword>
<keyword id="KW-0325">Glycoprotein</keyword>
<keyword id="KW-0326">Glycosidase</keyword>
<keyword id="KW-0378">Hydrolase</keyword>
<sequence length="140" mass="15646">DFMFGTSTASGGLAPSGVMNSLEPKGLAYYNNLLNELLKVLFTYFGDRAYAPNSPQRLSLSLSGVFHLLRGTADFYALNHYSSRDKYGLPKLLLTEDGYGDDGQLDDFEKNYLNATLQAMYLMKEQNVTSVHYTVNKCMN</sequence>